<sequence length="498" mass="56446">MAHPHLLAERISRLSSSLEKGLYERSHAIRLCLLAALSGESVFLLGPPGIAKSLIARRLKFAFQNARAFEYLMTRFSTPEEVFGPLSIQALKDEGRYERLTSGYLPEAEIVFLDEIWKAGPAILNTLLTAINERQFRNGAHVEKIPMRLLVAASNELPEADSSLEALYDRMLIRLWLDKVQDKANFRSMLTSQQDENDNPVPDALQVTDEEYERWQKEIGEITLPDHVFELIFMLRQQLDKLPDAPYVSDRRWKKAIRLLQASAFFSGRSAVAPVDLILLKDCLWYDAQSLNLIQQQIDVLMTGHAWQQQGMLTRLGAIVQRHLQLQQQQSDKTALTVIRLGGIFSRRQQYQLPVNVTASTLTLLLQKPLKLHDMEVVHISFERNALEQWLSKGGEIRGKLNGIGFAQKLNLEVDSAQHLVVRDVSLQGSTLALPGSSAEGLPGEIKQQLEELESDWRKQHALFSEQQKCLFIPGDWLGRIEASLQDVSAQIRQAQQC</sequence>
<dbReference type="EC" id="3.6.1.-" evidence="1"/>
<dbReference type="EMBL" id="CP000946">
    <property type="protein sequence ID" value="ACA79844.1"/>
    <property type="molecule type" value="Genomic_DNA"/>
</dbReference>
<dbReference type="RefSeq" id="WP_001300947.1">
    <property type="nucleotide sequence ID" value="NZ_MTFT01000013.1"/>
</dbReference>
<dbReference type="SMR" id="B1IWZ2"/>
<dbReference type="KEGG" id="ecl:EcolC_4248"/>
<dbReference type="HOGENOM" id="CLU_018678_1_0_6"/>
<dbReference type="GO" id="GO:0005737">
    <property type="term" value="C:cytoplasm"/>
    <property type="evidence" value="ECO:0007669"/>
    <property type="project" value="UniProtKB-SubCell"/>
</dbReference>
<dbReference type="GO" id="GO:0005524">
    <property type="term" value="F:ATP binding"/>
    <property type="evidence" value="ECO:0007669"/>
    <property type="project" value="UniProtKB-KW"/>
</dbReference>
<dbReference type="GO" id="GO:0016887">
    <property type="term" value="F:ATP hydrolysis activity"/>
    <property type="evidence" value="ECO:0007669"/>
    <property type="project" value="UniProtKB-UniRule"/>
</dbReference>
<dbReference type="CDD" id="cd00009">
    <property type="entry name" value="AAA"/>
    <property type="match status" value="1"/>
</dbReference>
<dbReference type="FunFam" id="3.40.50.300:FF:000410">
    <property type="entry name" value="ATPase RavA"/>
    <property type="match status" value="1"/>
</dbReference>
<dbReference type="Gene3D" id="1.20.58.1510">
    <property type="match status" value="1"/>
</dbReference>
<dbReference type="Gene3D" id="2.40.128.430">
    <property type="match status" value="1"/>
</dbReference>
<dbReference type="Gene3D" id="3.40.50.300">
    <property type="entry name" value="P-loop containing nucleotide triphosphate hydrolases"/>
    <property type="match status" value="1"/>
</dbReference>
<dbReference type="HAMAP" id="MF_01625">
    <property type="entry name" value="ATPase_RavA"/>
    <property type="match status" value="1"/>
</dbReference>
<dbReference type="InterPro" id="IPR003593">
    <property type="entry name" value="AAA+_ATPase"/>
</dbReference>
<dbReference type="InterPro" id="IPR023671">
    <property type="entry name" value="ATPase_RavA"/>
</dbReference>
<dbReference type="InterPro" id="IPR022547">
    <property type="entry name" value="ATPase_RavA_C"/>
</dbReference>
<dbReference type="InterPro" id="IPR045427">
    <property type="entry name" value="MoxR"/>
</dbReference>
<dbReference type="InterPro" id="IPR027417">
    <property type="entry name" value="P-loop_NTPase"/>
</dbReference>
<dbReference type="InterPro" id="IPR041538">
    <property type="entry name" value="RavA-like_AAA_lid"/>
</dbReference>
<dbReference type="InterPro" id="IPR050513">
    <property type="entry name" value="RavA_ATPases"/>
</dbReference>
<dbReference type="InterPro" id="IPR046898">
    <property type="entry name" value="RavA_LARA_dom"/>
</dbReference>
<dbReference type="InterPro" id="IPR046932">
    <property type="entry name" value="RavA_LARA_sf"/>
</dbReference>
<dbReference type="NCBIfam" id="NF010054">
    <property type="entry name" value="PRK13531.1"/>
    <property type="match status" value="1"/>
</dbReference>
<dbReference type="PANTHER" id="PTHR32204">
    <property type="entry name" value="ATPASE RAVA"/>
    <property type="match status" value="1"/>
</dbReference>
<dbReference type="PANTHER" id="PTHR32204:SF0">
    <property type="entry name" value="ATPASE RAVA"/>
    <property type="match status" value="1"/>
</dbReference>
<dbReference type="Pfam" id="PF17868">
    <property type="entry name" value="AAA_lid_8"/>
    <property type="match status" value="1"/>
</dbReference>
<dbReference type="Pfam" id="PF12592">
    <property type="entry name" value="ATPase_RavA_C"/>
    <property type="match status" value="1"/>
</dbReference>
<dbReference type="Pfam" id="PF20030">
    <property type="entry name" value="bpMoxR"/>
    <property type="match status" value="1"/>
</dbReference>
<dbReference type="Pfam" id="PF20265">
    <property type="entry name" value="LARA_dom"/>
    <property type="match status" value="1"/>
</dbReference>
<dbReference type="SMART" id="SM00382">
    <property type="entry name" value="AAA"/>
    <property type="match status" value="1"/>
</dbReference>
<dbReference type="SUPFAM" id="SSF52540">
    <property type="entry name" value="P-loop containing nucleoside triphosphate hydrolases"/>
    <property type="match status" value="1"/>
</dbReference>
<gene>
    <name evidence="1" type="primary">ravA</name>
    <name type="ordered locus">EcolC_4248</name>
</gene>
<organism>
    <name type="scientific">Escherichia coli (strain ATCC 8739 / DSM 1576 / NBRC 3972 / NCIMB 8545 / WDCM 00012 / Crooks)</name>
    <dbReference type="NCBI Taxonomy" id="481805"/>
    <lineage>
        <taxon>Bacteria</taxon>
        <taxon>Pseudomonadati</taxon>
        <taxon>Pseudomonadota</taxon>
        <taxon>Gammaproteobacteria</taxon>
        <taxon>Enterobacterales</taxon>
        <taxon>Enterobacteriaceae</taxon>
        <taxon>Escherichia</taxon>
    </lineage>
</organism>
<proteinExistence type="inferred from homology"/>
<keyword id="KW-0067">ATP-binding</keyword>
<keyword id="KW-0143">Chaperone</keyword>
<keyword id="KW-0963">Cytoplasm</keyword>
<keyword id="KW-0378">Hydrolase</keyword>
<keyword id="KW-0547">Nucleotide-binding</keyword>
<comment type="function">
    <text evidence="1">Component of the RavA-ViaA chaperone complex, which may act on the membrane to optimize the function of some of the respiratory chains. RavA functions as an ATPase.</text>
</comment>
<comment type="catalytic activity">
    <reaction evidence="1">
        <text>ATP + H2O = ADP + phosphate + H(+)</text>
        <dbReference type="Rhea" id="RHEA:13065"/>
        <dbReference type="ChEBI" id="CHEBI:15377"/>
        <dbReference type="ChEBI" id="CHEBI:15378"/>
        <dbReference type="ChEBI" id="CHEBI:30616"/>
        <dbReference type="ChEBI" id="CHEBI:43474"/>
        <dbReference type="ChEBI" id="CHEBI:456216"/>
    </reaction>
</comment>
<comment type="activity regulation">
    <text evidence="1">ATPase activity is stimulated by ViaA.</text>
</comment>
<comment type="subunit">
    <text evidence="1">Homohexamer. Interacts with ViaA.</text>
</comment>
<comment type="subcellular location">
    <subcellularLocation>
        <location evidence="1">Cytoplasm</location>
    </subcellularLocation>
</comment>
<comment type="similarity">
    <text evidence="1">Belongs to the RavA family.</text>
</comment>
<evidence type="ECO:0000255" key="1">
    <source>
        <dbReference type="HAMAP-Rule" id="MF_01625"/>
    </source>
</evidence>
<feature type="chain" id="PRO_1000088097" description="Regulatory ATPase RavA">
    <location>
        <begin position="1"/>
        <end position="498"/>
    </location>
</feature>
<feature type="binding site" evidence="1">
    <location>
        <position position="23"/>
    </location>
    <ligand>
        <name>ADP</name>
        <dbReference type="ChEBI" id="CHEBI:456216"/>
    </ligand>
</feature>
<feature type="binding site" evidence="1">
    <location>
        <position position="49"/>
    </location>
    <ligand>
        <name>ADP</name>
        <dbReference type="ChEBI" id="CHEBI:456216"/>
    </ligand>
</feature>
<feature type="binding site" evidence="1">
    <location>
        <position position="50"/>
    </location>
    <ligand>
        <name>ADP</name>
        <dbReference type="ChEBI" id="CHEBI:456216"/>
    </ligand>
</feature>
<feature type="binding site" evidence="1">
    <location>
        <position position="51"/>
    </location>
    <ligand>
        <name>ADP</name>
        <dbReference type="ChEBI" id="CHEBI:456216"/>
    </ligand>
</feature>
<feature type="binding site" evidence="1">
    <location>
        <position position="52"/>
    </location>
    <ligand>
        <name>ADP</name>
        <dbReference type="ChEBI" id="CHEBI:456216"/>
    </ligand>
</feature>
<feature type="binding site" evidence="1">
    <location>
        <position position="53"/>
    </location>
    <ligand>
        <name>ADP</name>
        <dbReference type="ChEBI" id="CHEBI:456216"/>
    </ligand>
</feature>
<feature type="binding site" evidence="1">
    <location>
        <position position="54"/>
    </location>
    <ligand>
        <name>ADP</name>
        <dbReference type="ChEBI" id="CHEBI:456216"/>
    </ligand>
</feature>
<feature type="binding site" evidence="1">
    <location>
        <position position="196"/>
    </location>
    <ligand>
        <name>ADP</name>
        <dbReference type="ChEBI" id="CHEBI:456216"/>
    </ligand>
</feature>
<name>RAVA_ECOLC</name>
<accession>B1IWZ2</accession>
<reference key="1">
    <citation type="submission" date="2008-02" db="EMBL/GenBank/DDBJ databases">
        <title>Complete sequence of Escherichia coli C str. ATCC 8739.</title>
        <authorList>
            <person name="Copeland A."/>
            <person name="Lucas S."/>
            <person name="Lapidus A."/>
            <person name="Glavina del Rio T."/>
            <person name="Dalin E."/>
            <person name="Tice H."/>
            <person name="Bruce D."/>
            <person name="Goodwin L."/>
            <person name="Pitluck S."/>
            <person name="Kiss H."/>
            <person name="Brettin T."/>
            <person name="Detter J.C."/>
            <person name="Han C."/>
            <person name="Kuske C.R."/>
            <person name="Schmutz J."/>
            <person name="Larimer F."/>
            <person name="Land M."/>
            <person name="Hauser L."/>
            <person name="Kyrpides N."/>
            <person name="Mikhailova N."/>
            <person name="Ingram L."/>
            <person name="Richardson P."/>
        </authorList>
    </citation>
    <scope>NUCLEOTIDE SEQUENCE [LARGE SCALE GENOMIC DNA]</scope>
    <source>
        <strain>ATCC 8739 / DSM 1576 / NBRC 3972 / NCIMB 8545 / WDCM 00012 / Crooks</strain>
    </source>
</reference>
<protein>
    <recommendedName>
        <fullName evidence="1">Regulatory ATPase RavA</fullName>
        <ecNumber evidence="1">3.6.1.-</ecNumber>
    </recommendedName>
    <alternativeName>
        <fullName evidence="1">Regulatory ATPase variant A</fullName>
    </alternativeName>
</protein>